<evidence type="ECO:0000255" key="1">
    <source>
        <dbReference type="HAMAP-Rule" id="MF_00633"/>
    </source>
</evidence>
<keyword id="KW-0150">Chloroplast</keyword>
<keyword id="KW-0249">Electron transport</keyword>
<keyword id="KW-0349">Heme</keyword>
<keyword id="KW-0408">Iron</keyword>
<keyword id="KW-0472">Membrane</keyword>
<keyword id="KW-0479">Metal-binding</keyword>
<keyword id="KW-0602">Photosynthesis</keyword>
<keyword id="KW-0934">Plastid</keyword>
<keyword id="KW-0793">Thylakoid</keyword>
<keyword id="KW-0812">Transmembrane</keyword>
<keyword id="KW-1133">Transmembrane helix</keyword>
<keyword id="KW-0813">Transport</keyword>
<feature type="chain" id="PRO_0000061790" description="Cytochrome b6">
    <location>
        <begin position="1"/>
        <end position="215"/>
    </location>
</feature>
<feature type="transmembrane region" description="Helical" evidence="1">
    <location>
        <begin position="32"/>
        <end position="52"/>
    </location>
</feature>
<feature type="transmembrane region" description="Helical" evidence="1">
    <location>
        <begin position="90"/>
        <end position="110"/>
    </location>
</feature>
<feature type="transmembrane region" description="Helical" evidence="1">
    <location>
        <begin position="116"/>
        <end position="136"/>
    </location>
</feature>
<feature type="transmembrane region" description="Helical" evidence="1">
    <location>
        <begin position="186"/>
        <end position="206"/>
    </location>
</feature>
<feature type="binding site" description="covalent" evidence="1">
    <location>
        <position position="35"/>
    </location>
    <ligand>
        <name>heme c</name>
        <dbReference type="ChEBI" id="CHEBI:61717"/>
    </ligand>
</feature>
<feature type="binding site" description="axial binding residue" evidence="1">
    <location>
        <position position="86"/>
    </location>
    <ligand>
        <name>heme b</name>
        <dbReference type="ChEBI" id="CHEBI:60344"/>
        <label>2</label>
    </ligand>
    <ligandPart>
        <name>Fe</name>
        <dbReference type="ChEBI" id="CHEBI:18248"/>
    </ligandPart>
</feature>
<feature type="binding site" description="axial binding residue" evidence="1">
    <location>
        <position position="100"/>
    </location>
    <ligand>
        <name>heme b</name>
        <dbReference type="ChEBI" id="CHEBI:60344"/>
        <label>1</label>
    </ligand>
    <ligandPart>
        <name>Fe</name>
        <dbReference type="ChEBI" id="CHEBI:18248"/>
    </ligandPart>
</feature>
<feature type="binding site" description="axial binding residue" evidence="1">
    <location>
        <position position="187"/>
    </location>
    <ligand>
        <name>heme b</name>
        <dbReference type="ChEBI" id="CHEBI:60344"/>
        <label>2</label>
    </ligand>
    <ligandPart>
        <name>Fe</name>
        <dbReference type="ChEBI" id="CHEBI:18248"/>
    </ligandPart>
</feature>
<feature type="binding site" description="axial binding residue" evidence="1">
    <location>
        <position position="202"/>
    </location>
    <ligand>
        <name>heme b</name>
        <dbReference type="ChEBI" id="CHEBI:60344"/>
        <label>1</label>
    </ligand>
    <ligandPart>
        <name>Fe</name>
        <dbReference type="ChEBI" id="CHEBI:18248"/>
    </ligandPart>
</feature>
<comment type="function">
    <text evidence="1">Component of the cytochrome b6-f complex, which mediates electron transfer between photosystem II (PSII) and photosystem I (PSI), cyclic electron flow around PSI, and state transitions.</text>
</comment>
<comment type="cofactor">
    <cofactor evidence="1">
        <name>heme b</name>
        <dbReference type="ChEBI" id="CHEBI:60344"/>
    </cofactor>
    <text evidence="1">Binds 2 heme b groups non-covalently with two histidine residues as axial ligands.</text>
</comment>
<comment type="cofactor">
    <cofactor evidence="1">
        <name>heme c</name>
        <dbReference type="ChEBI" id="CHEBI:61717"/>
    </cofactor>
    <text evidence="1">Binds one heme group covalently by a single cysteine link with no axial amino acid ligand. This heme was named heme ci.</text>
</comment>
<comment type="subunit">
    <text evidence="1">The 4 large subunits of the cytochrome b6-f complex are cytochrome b6, subunit IV (17 kDa polypeptide, PetD), cytochrome f and the Rieske protein, while the 4 small subunits are PetG, PetL, PetM and PetN. The complex functions as a dimer.</text>
</comment>
<comment type="subcellular location">
    <subcellularLocation>
        <location evidence="1">Plastid</location>
        <location evidence="1">Chloroplast thylakoid membrane</location>
        <topology evidence="1">Multi-pass membrane protein</topology>
    </subcellularLocation>
</comment>
<comment type="miscellaneous">
    <text evidence="1">Heme 1 (or BH or b566) is high-potential and absorbs at about 566 nm, and heme 2 (or BL or b562) is low-potential and absorbs at about 562 nm.</text>
</comment>
<comment type="similarity">
    <text evidence="1">Belongs to the cytochrome b family. PetB subfamily.</text>
</comment>
<dbReference type="EMBL" id="AF022186">
    <property type="protein sequence ID" value="AAF12974.1"/>
    <property type="molecule type" value="Genomic_DNA"/>
</dbReference>
<dbReference type="RefSeq" id="NP_045120.1">
    <property type="nucleotide sequence ID" value="NC_001840.1"/>
</dbReference>
<dbReference type="SMR" id="Q9TLZ7"/>
<dbReference type="GeneID" id="800306"/>
<dbReference type="GO" id="GO:0009535">
    <property type="term" value="C:chloroplast thylakoid membrane"/>
    <property type="evidence" value="ECO:0007669"/>
    <property type="project" value="UniProtKB-SubCell"/>
</dbReference>
<dbReference type="GO" id="GO:0045158">
    <property type="term" value="F:electron transporter, transferring electrons within cytochrome b6/f complex of photosystem II activity"/>
    <property type="evidence" value="ECO:0007669"/>
    <property type="project" value="UniProtKB-UniRule"/>
</dbReference>
<dbReference type="GO" id="GO:0046872">
    <property type="term" value="F:metal ion binding"/>
    <property type="evidence" value="ECO:0007669"/>
    <property type="project" value="UniProtKB-KW"/>
</dbReference>
<dbReference type="GO" id="GO:0016491">
    <property type="term" value="F:oxidoreductase activity"/>
    <property type="evidence" value="ECO:0007669"/>
    <property type="project" value="InterPro"/>
</dbReference>
<dbReference type="GO" id="GO:0015979">
    <property type="term" value="P:photosynthesis"/>
    <property type="evidence" value="ECO:0007669"/>
    <property type="project" value="UniProtKB-UniRule"/>
</dbReference>
<dbReference type="GO" id="GO:0022904">
    <property type="term" value="P:respiratory electron transport chain"/>
    <property type="evidence" value="ECO:0007669"/>
    <property type="project" value="InterPro"/>
</dbReference>
<dbReference type="CDD" id="cd00284">
    <property type="entry name" value="Cytochrome_b_N"/>
    <property type="match status" value="1"/>
</dbReference>
<dbReference type="Gene3D" id="1.20.810.10">
    <property type="entry name" value="Cytochrome Bc1 Complex, Chain C"/>
    <property type="match status" value="1"/>
</dbReference>
<dbReference type="HAMAP" id="MF_00633">
    <property type="entry name" value="Cytb6_f_cytb6"/>
    <property type="match status" value="1"/>
</dbReference>
<dbReference type="InterPro" id="IPR005797">
    <property type="entry name" value="Cyt_b/b6_N"/>
</dbReference>
<dbReference type="InterPro" id="IPR023530">
    <property type="entry name" value="Cyt_B6_PetB"/>
</dbReference>
<dbReference type="InterPro" id="IPR027387">
    <property type="entry name" value="Cytb/b6-like_sf"/>
</dbReference>
<dbReference type="InterPro" id="IPR048259">
    <property type="entry name" value="Cytochrome_b_N_euk/bac"/>
</dbReference>
<dbReference type="InterPro" id="IPR016174">
    <property type="entry name" value="Di-haem_cyt_TM"/>
</dbReference>
<dbReference type="NCBIfam" id="NF002990">
    <property type="entry name" value="PRK03735.1"/>
    <property type="match status" value="1"/>
</dbReference>
<dbReference type="PANTHER" id="PTHR19271">
    <property type="entry name" value="CYTOCHROME B"/>
    <property type="match status" value="1"/>
</dbReference>
<dbReference type="PANTHER" id="PTHR19271:SF16">
    <property type="entry name" value="CYTOCHROME B"/>
    <property type="match status" value="1"/>
</dbReference>
<dbReference type="Pfam" id="PF00033">
    <property type="entry name" value="Cytochrome_B"/>
    <property type="match status" value="1"/>
</dbReference>
<dbReference type="PIRSF" id="PIRSF000032">
    <property type="entry name" value="Cytochrome_b6"/>
    <property type="match status" value="1"/>
</dbReference>
<dbReference type="SUPFAM" id="SSF81342">
    <property type="entry name" value="Transmembrane di-heme cytochromes"/>
    <property type="match status" value="1"/>
</dbReference>
<dbReference type="PROSITE" id="PS51002">
    <property type="entry name" value="CYTB_NTER"/>
    <property type="match status" value="1"/>
</dbReference>
<accession>Q9TLZ7</accession>
<reference key="1">
    <citation type="journal article" date="2000" name="J. Mol. Evol.">
        <title>The structure and gene repertoire of an ancient red algal plastid genome.</title>
        <authorList>
            <person name="Gloeckner G."/>
            <person name="Rosenthal A."/>
            <person name="Valentin K.-U."/>
        </authorList>
    </citation>
    <scope>NUCLEOTIDE SEQUENCE [LARGE SCALE GENOMIC DNA]</scope>
    <source>
        <strain>RK-1</strain>
    </source>
</reference>
<proteinExistence type="inferred from homology"/>
<name>CYB6_CYACA</name>
<organism>
    <name type="scientific">Cyanidium caldarium</name>
    <name type="common">Red alga</name>
    <dbReference type="NCBI Taxonomy" id="2771"/>
    <lineage>
        <taxon>Eukaryota</taxon>
        <taxon>Rhodophyta</taxon>
        <taxon>Bangiophyceae</taxon>
        <taxon>Cyanidiales</taxon>
        <taxon>Cyanidiaceae</taxon>
        <taxon>Cyanidium</taxon>
    </lineage>
</organism>
<sequence length="215" mass="24249">MSKFYDWFQERLEIQLIADDISAKYVPPHVNVFYCFGGMTLTCFLVQLATGFAMTFYYKPTTIEAFSSIQHIMTQVSFGWLIRSLHRWSASMMVLMMILHIFRVYLTGGFKKPRELTWITGVILAVLTVSFGVTGYSLPWDQVGYWACKIVTGVPEAIPVVGDNVVEILRGGTGVGQATLTRFYSLHTLFLPALSVIFLLAHFLMIRKQGISGPL</sequence>
<geneLocation type="chloroplast"/>
<gene>
    <name evidence="1" type="primary">petB</name>
</gene>
<protein>
    <recommendedName>
        <fullName evidence="1">Cytochrome b6</fullName>
    </recommendedName>
</protein>